<feature type="chain" id="PRO_0000359805" description="Photosystem II CP47 reaction center protein">
    <location>
        <begin position="1"/>
        <end position="508"/>
    </location>
</feature>
<feature type="transmembrane region" description="Helical" evidence="1">
    <location>
        <begin position="21"/>
        <end position="36"/>
    </location>
</feature>
<feature type="transmembrane region" description="Helical" evidence="1">
    <location>
        <begin position="101"/>
        <end position="115"/>
    </location>
</feature>
<feature type="transmembrane region" description="Helical" evidence="1">
    <location>
        <begin position="140"/>
        <end position="156"/>
    </location>
</feature>
<feature type="transmembrane region" description="Helical" evidence="1">
    <location>
        <begin position="203"/>
        <end position="218"/>
    </location>
</feature>
<feature type="transmembrane region" description="Helical" evidence="1">
    <location>
        <begin position="237"/>
        <end position="252"/>
    </location>
</feature>
<feature type="transmembrane region" description="Helical" evidence="1">
    <location>
        <begin position="457"/>
        <end position="472"/>
    </location>
</feature>
<keyword id="KW-0148">Chlorophyll</keyword>
<keyword id="KW-0150">Chloroplast</keyword>
<keyword id="KW-0157">Chromophore</keyword>
<keyword id="KW-0472">Membrane</keyword>
<keyword id="KW-0602">Photosynthesis</keyword>
<keyword id="KW-0604">Photosystem II</keyword>
<keyword id="KW-0934">Plastid</keyword>
<keyword id="KW-0793">Thylakoid</keyword>
<keyword id="KW-0812">Transmembrane</keyword>
<keyword id="KW-1133">Transmembrane helix</keyword>
<gene>
    <name evidence="1" type="primary">psbB</name>
</gene>
<evidence type="ECO:0000255" key="1">
    <source>
        <dbReference type="HAMAP-Rule" id="MF_01495"/>
    </source>
</evidence>
<sequence length="508" mass="56043">MGLPWYRVHTVVLNDPGRLIAVHIMHTALVSGWAGSMALYELAVFDPSDPVLDPMWRQGMFVIPFITRLGVTKSWGGWSITGETVTNAGLWSYEGVAAVHIILSGLLFLAAIWHWVFWDLELFRDERTGKPSLDLPKIFGIHLFLSGLLCFGFGAFHVTGLFGPGIWVSDPYGLTGSVQPVSPAWGAEGFDPFNAGGIASHHIAAGILGILAGLFHLSVRPPQRLYKGLRMGNVETVLSSSIAAVFWAAFVVAGTMWYGSAATPIELFGPTRYQWDQGYFEQEIDKRVGTSLSEGLTLSEAWSKIPEKLAFYDYIGNNPAKGGLFRAGAMDNGDGIAVGWLGHASFKDKEGRELFVRRMPSFFETFPVVLLDSEGIVRADVPFRRAESKYSIEQVGVTVQFYGGELDGVSFSDPATVKKYARRAQLGEIFEFDRATLKSDGVFRSSPRGWFTFGHANFALLFFFGHIWHGGRTLFRDVFAGIDPDLDAQVEFGLFQKLGDPSTRREAV</sequence>
<protein>
    <recommendedName>
        <fullName evidence="1">Photosystem II CP47 reaction center protein</fullName>
    </recommendedName>
    <alternativeName>
        <fullName evidence="1">PSII 47 kDa protein</fullName>
    </alternativeName>
    <alternativeName>
        <fullName evidence="1">Protein CP-47</fullName>
    </alternativeName>
</protein>
<name>PSBB_CHAGL</name>
<reference key="1">
    <citation type="journal article" date="2002" name="Proc. Natl. Acad. Sci. U.S.A.">
        <title>The chloroplast and mitochondrial genome sequences of the charophyte Chaetosphaeridium globosum: insights into the timing of the events that restructured organelle DNAs within the green algal lineage that led to land plants.</title>
        <authorList>
            <person name="Turmel M."/>
            <person name="Otis C."/>
            <person name="Lemieux C."/>
        </authorList>
    </citation>
    <scope>NUCLEOTIDE SEQUENCE [LARGE SCALE GENOMIC DNA]</scope>
    <source>
        <strain>M1311</strain>
    </source>
</reference>
<proteinExistence type="inferred from homology"/>
<geneLocation type="chloroplast"/>
<organism>
    <name type="scientific">Chaetosphaeridium globosum</name>
    <name type="common">Charophycean green alga</name>
    <name type="synonym">Herposteiron globosum</name>
    <dbReference type="NCBI Taxonomy" id="96477"/>
    <lineage>
        <taxon>Eukaryota</taxon>
        <taxon>Viridiplantae</taxon>
        <taxon>Streptophyta</taxon>
        <taxon>Coleochaetophyceae</taxon>
        <taxon>Coleochaetales</taxon>
        <taxon>Chaetosphaeridiaceae</taxon>
        <taxon>Chaetosphaeridium</taxon>
    </lineage>
</organism>
<comment type="function">
    <text evidence="1">One of the components of the core complex of photosystem II (PSII). It binds chlorophyll and helps catalyze the primary light-induced photochemical processes of PSII. PSII is a light-driven water:plastoquinone oxidoreductase, using light energy to abstract electrons from H(2)O, generating O(2) and a proton gradient subsequently used for ATP formation.</text>
</comment>
<comment type="cofactor">
    <text evidence="1">Binds multiple chlorophylls. PSII binds additional chlorophylls, carotenoids and specific lipids.</text>
</comment>
<comment type="subunit">
    <text evidence="1">PSII is composed of 1 copy each of membrane proteins PsbA, PsbB, PsbC, PsbD, PsbE, PsbF, PsbH, PsbI, PsbJ, PsbK, PsbL, PsbM, PsbT, PsbX, PsbY, PsbZ, Psb30/Ycf12, at least 3 peripheral proteins of the oxygen-evolving complex and a large number of cofactors. It forms dimeric complexes.</text>
</comment>
<comment type="subcellular location">
    <subcellularLocation>
        <location evidence="1">Plastid</location>
        <location evidence="1">Chloroplast thylakoid membrane</location>
        <topology evidence="1">Multi-pass membrane protein</topology>
    </subcellularLocation>
</comment>
<comment type="similarity">
    <text evidence="1">Belongs to the PsbB/PsbC family. PsbB subfamily.</text>
</comment>
<accession>Q8M9Z0</accession>
<dbReference type="EMBL" id="AF494278">
    <property type="protein sequence ID" value="AAM96539.1"/>
    <property type="molecule type" value="Genomic_DNA"/>
</dbReference>
<dbReference type="RefSeq" id="NP_683796.1">
    <property type="nucleotide sequence ID" value="NC_004115.1"/>
</dbReference>
<dbReference type="SMR" id="Q8M9Z0"/>
<dbReference type="GeneID" id="860695"/>
<dbReference type="GO" id="GO:0009535">
    <property type="term" value="C:chloroplast thylakoid membrane"/>
    <property type="evidence" value="ECO:0007669"/>
    <property type="project" value="UniProtKB-SubCell"/>
</dbReference>
<dbReference type="GO" id="GO:0009523">
    <property type="term" value="C:photosystem II"/>
    <property type="evidence" value="ECO:0007669"/>
    <property type="project" value="UniProtKB-KW"/>
</dbReference>
<dbReference type="GO" id="GO:0016168">
    <property type="term" value="F:chlorophyll binding"/>
    <property type="evidence" value="ECO:0007669"/>
    <property type="project" value="UniProtKB-UniRule"/>
</dbReference>
<dbReference type="GO" id="GO:0045156">
    <property type="term" value="F:electron transporter, transferring electrons within the cyclic electron transport pathway of photosynthesis activity"/>
    <property type="evidence" value="ECO:0007669"/>
    <property type="project" value="InterPro"/>
</dbReference>
<dbReference type="GO" id="GO:0009772">
    <property type="term" value="P:photosynthetic electron transport in photosystem II"/>
    <property type="evidence" value="ECO:0007669"/>
    <property type="project" value="InterPro"/>
</dbReference>
<dbReference type="FunFam" id="3.10.680.10:FF:000001">
    <property type="entry name" value="Photosystem II CP47 reaction center protein"/>
    <property type="match status" value="1"/>
</dbReference>
<dbReference type="Gene3D" id="3.10.680.10">
    <property type="entry name" value="Photosystem II CP47 reaction center protein"/>
    <property type="match status" value="1"/>
</dbReference>
<dbReference type="HAMAP" id="MF_01495">
    <property type="entry name" value="PSII_PsbB_CP47"/>
    <property type="match status" value="1"/>
</dbReference>
<dbReference type="InterPro" id="IPR000932">
    <property type="entry name" value="PS_antenna-like"/>
</dbReference>
<dbReference type="InterPro" id="IPR036001">
    <property type="entry name" value="PS_II_antenna-like_sf"/>
</dbReference>
<dbReference type="InterPro" id="IPR017486">
    <property type="entry name" value="PSII_PsbB"/>
</dbReference>
<dbReference type="NCBIfam" id="TIGR03039">
    <property type="entry name" value="PS_II_CP47"/>
    <property type="match status" value="1"/>
</dbReference>
<dbReference type="Pfam" id="PF00421">
    <property type="entry name" value="PSII"/>
    <property type="match status" value="1"/>
</dbReference>
<dbReference type="SUPFAM" id="SSF161077">
    <property type="entry name" value="Photosystem II antenna protein-like"/>
    <property type="match status" value="1"/>
</dbReference>